<protein>
    <recommendedName>
        <fullName evidence="1">Ribosomal RNA small subunit methyltransferase H</fullName>
        <ecNumber evidence="1">2.1.1.199</ecNumber>
    </recommendedName>
    <alternativeName>
        <fullName evidence="1">16S rRNA m(4)C1402 methyltransferase</fullName>
    </alternativeName>
    <alternativeName>
        <fullName evidence="1">rRNA (cytosine-N(4)-)-methyltransferase RsmH</fullName>
    </alternativeName>
</protein>
<feature type="chain" id="PRO_0000387067" description="Ribosomal RNA small subunit methyltransferase H">
    <location>
        <begin position="1"/>
        <end position="341"/>
    </location>
</feature>
<feature type="binding site" evidence="1">
    <location>
        <begin position="47"/>
        <end position="49"/>
    </location>
    <ligand>
        <name>S-adenosyl-L-methionine</name>
        <dbReference type="ChEBI" id="CHEBI:59789"/>
    </ligand>
</feature>
<feature type="binding site" evidence="1">
    <location>
        <position position="64"/>
    </location>
    <ligand>
        <name>S-adenosyl-L-methionine</name>
        <dbReference type="ChEBI" id="CHEBI:59789"/>
    </ligand>
</feature>
<feature type="binding site" evidence="1">
    <location>
        <position position="91"/>
    </location>
    <ligand>
        <name>S-adenosyl-L-methionine</name>
        <dbReference type="ChEBI" id="CHEBI:59789"/>
    </ligand>
</feature>
<feature type="binding site" evidence="1">
    <location>
        <position position="109"/>
    </location>
    <ligand>
        <name>S-adenosyl-L-methionine</name>
        <dbReference type="ChEBI" id="CHEBI:59789"/>
    </ligand>
</feature>
<feature type="binding site" evidence="1">
    <location>
        <position position="116"/>
    </location>
    <ligand>
        <name>S-adenosyl-L-methionine</name>
        <dbReference type="ChEBI" id="CHEBI:59789"/>
    </ligand>
</feature>
<keyword id="KW-0963">Cytoplasm</keyword>
<keyword id="KW-0489">Methyltransferase</keyword>
<keyword id="KW-1185">Reference proteome</keyword>
<keyword id="KW-0698">rRNA processing</keyword>
<keyword id="KW-0949">S-adenosyl-L-methionine</keyword>
<keyword id="KW-0808">Transferase</keyword>
<reference key="1">
    <citation type="journal article" date="2006" name="Proc. Natl. Acad. Sci. U.S.A.">
        <title>The partitioned Rhizobium etli genome: genetic and metabolic redundancy in seven interacting replicons.</title>
        <authorList>
            <person name="Gonzalez V."/>
            <person name="Santamaria R.I."/>
            <person name="Bustos P."/>
            <person name="Hernandez-Gonzalez I."/>
            <person name="Medrano-Soto A."/>
            <person name="Moreno-Hagelsieb G."/>
            <person name="Janga S.C."/>
            <person name="Ramirez M.A."/>
            <person name="Jimenez-Jacinto V."/>
            <person name="Collado-Vides J."/>
            <person name="Davila G."/>
        </authorList>
    </citation>
    <scope>NUCLEOTIDE SEQUENCE [LARGE SCALE GENOMIC DNA]</scope>
    <source>
        <strain>ATCC 51251 / DSM 11541 / JCM 21823 / NBRC 15573 / CFN 42</strain>
    </source>
</reference>
<name>RSMH_RHIEC</name>
<evidence type="ECO:0000255" key="1">
    <source>
        <dbReference type="HAMAP-Rule" id="MF_01007"/>
    </source>
</evidence>
<comment type="function">
    <text evidence="1">Specifically methylates the N4 position of cytidine in position 1402 (C1402) of 16S rRNA.</text>
</comment>
<comment type="catalytic activity">
    <reaction evidence="1">
        <text>cytidine(1402) in 16S rRNA + S-adenosyl-L-methionine = N(4)-methylcytidine(1402) in 16S rRNA + S-adenosyl-L-homocysteine + H(+)</text>
        <dbReference type="Rhea" id="RHEA:42928"/>
        <dbReference type="Rhea" id="RHEA-COMP:10286"/>
        <dbReference type="Rhea" id="RHEA-COMP:10287"/>
        <dbReference type="ChEBI" id="CHEBI:15378"/>
        <dbReference type="ChEBI" id="CHEBI:57856"/>
        <dbReference type="ChEBI" id="CHEBI:59789"/>
        <dbReference type="ChEBI" id="CHEBI:74506"/>
        <dbReference type="ChEBI" id="CHEBI:82748"/>
        <dbReference type="EC" id="2.1.1.199"/>
    </reaction>
</comment>
<comment type="subcellular location">
    <subcellularLocation>
        <location evidence="1">Cytoplasm</location>
    </subcellularLocation>
</comment>
<comment type="similarity">
    <text evidence="1">Belongs to the methyltransferase superfamily. RsmH family.</text>
</comment>
<accession>Q2K6B3</accession>
<dbReference type="EC" id="2.1.1.199" evidence="1"/>
<dbReference type="EMBL" id="CP000133">
    <property type="protein sequence ID" value="ABC91623.1"/>
    <property type="molecule type" value="Genomic_DNA"/>
</dbReference>
<dbReference type="RefSeq" id="WP_011426100.1">
    <property type="nucleotide sequence ID" value="NC_007761.1"/>
</dbReference>
<dbReference type="SMR" id="Q2K6B3"/>
<dbReference type="KEGG" id="ret:RHE_CH02855"/>
<dbReference type="eggNOG" id="COG0275">
    <property type="taxonomic scope" value="Bacteria"/>
</dbReference>
<dbReference type="HOGENOM" id="CLU_038422_1_1_5"/>
<dbReference type="OrthoDB" id="9806637at2"/>
<dbReference type="Proteomes" id="UP000001936">
    <property type="component" value="Chromosome"/>
</dbReference>
<dbReference type="GO" id="GO:0005737">
    <property type="term" value="C:cytoplasm"/>
    <property type="evidence" value="ECO:0007669"/>
    <property type="project" value="UniProtKB-SubCell"/>
</dbReference>
<dbReference type="GO" id="GO:0071424">
    <property type="term" value="F:rRNA (cytosine-N4-)-methyltransferase activity"/>
    <property type="evidence" value="ECO:0007669"/>
    <property type="project" value="UniProtKB-UniRule"/>
</dbReference>
<dbReference type="GO" id="GO:0070475">
    <property type="term" value="P:rRNA base methylation"/>
    <property type="evidence" value="ECO:0007669"/>
    <property type="project" value="UniProtKB-UniRule"/>
</dbReference>
<dbReference type="Gene3D" id="1.10.150.170">
    <property type="entry name" value="Putative methyltransferase TM0872, insert domain"/>
    <property type="match status" value="1"/>
</dbReference>
<dbReference type="Gene3D" id="3.40.50.150">
    <property type="entry name" value="Vaccinia Virus protein VP39"/>
    <property type="match status" value="1"/>
</dbReference>
<dbReference type="HAMAP" id="MF_01007">
    <property type="entry name" value="16SrRNA_methyltr_H"/>
    <property type="match status" value="1"/>
</dbReference>
<dbReference type="InterPro" id="IPR002903">
    <property type="entry name" value="RsmH"/>
</dbReference>
<dbReference type="InterPro" id="IPR023397">
    <property type="entry name" value="SAM-dep_MeTrfase_MraW_recog"/>
</dbReference>
<dbReference type="InterPro" id="IPR029063">
    <property type="entry name" value="SAM-dependent_MTases_sf"/>
</dbReference>
<dbReference type="NCBIfam" id="TIGR00006">
    <property type="entry name" value="16S rRNA (cytosine(1402)-N(4))-methyltransferase RsmH"/>
    <property type="match status" value="1"/>
</dbReference>
<dbReference type="PANTHER" id="PTHR11265:SF0">
    <property type="entry name" value="12S RRNA N4-METHYLCYTIDINE METHYLTRANSFERASE"/>
    <property type="match status" value="1"/>
</dbReference>
<dbReference type="PANTHER" id="PTHR11265">
    <property type="entry name" value="S-ADENOSYL-METHYLTRANSFERASE MRAW"/>
    <property type="match status" value="1"/>
</dbReference>
<dbReference type="Pfam" id="PF01795">
    <property type="entry name" value="Methyltransf_5"/>
    <property type="match status" value="1"/>
</dbReference>
<dbReference type="PIRSF" id="PIRSF004486">
    <property type="entry name" value="MraW"/>
    <property type="match status" value="1"/>
</dbReference>
<dbReference type="SUPFAM" id="SSF81799">
    <property type="entry name" value="Putative methyltransferase TM0872, insert domain"/>
    <property type="match status" value="1"/>
</dbReference>
<dbReference type="SUPFAM" id="SSF53335">
    <property type="entry name" value="S-adenosyl-L-methionine-dependent methyltransferases"/>
    <property type="match status" value="1"/>
</dbReference>
<gene>
    <name evidence="1" type="primary">rsmH</name>
    <name type="synonym">mraW</name>
    <name type="ordered locus">RHE_CH02855</name>
</gene>
<proteinExistence type="inferred from homology"/>
<sequence length="341" mass="35868">MVTNPGGGSTDAGGGPVRHIPVLLNEVLAALSPAPGKLILDGTFGAGGYSAAILAAGAEVIALDRDPSAIAAGQAMVAAHAGRLRLIHAQFSNLGDHAPQGGLDGVVLDIGVSSMQIDEPERGFSFQKSGPLDMRMSATGVSAADVVNRAKVADLIRIFHFLGEENQAPRIAHAIEKRREEKPFETTRDLAGLIELVTPRKMKDKIHPATRVFQALRIFVNDELGELAQALFAAERTLKPGGRLVVVTFHSLEDRIVKKFFSDRAGRATGSRHLPAAHERAATFTAIGKPMVSASEAEAEANPRARSAKLRAGLRTDAAAEAADMSLFGFPNLASLGKLGG</sequence>
<organism>
    <name type="scientific">Rhizobium etli (strain ATCC 51251 / DSM 11541 / JCM 21823 / NBRC 15573 / CFN 42)</name>
    <dbReference type="NCBI Taxonomy" id="347834"/>
    <lineage>
        <taxon>Bacteria</taxon>
        <taxon>Pseudomonadati</taxon>
        <taxon>Pseudomonadota</taxon>
        <taxon>Alphaproteobacteria</taxon>
        <taxon>Hyphomicrobiales</taxon>
        <taxon>Rhizobiaceae</taxon>
        <taxon>Rhizobium/Agrobacterium group</taxon>
        <taxon>Rhizobium</taxon>
    </lineage>
</organism>